<proteinExistence type="inferred from homology"/>
<gene>
    <name evidence="1" type="primary">gcvT</name>
    <name type="ordered locus">cauri_1714</name>
</gene>
<keyword id="KW-0032">Aminotransferase</keyword>
<keyword id="KW-1185">Reference proteome</keyword>
<keyword id="KW-0808">Transferase</keyword>
<reference key="1">
    <citation type="journal article" date="2010" name="BMC Genomics">
        <title>Complete genome sequence and lifestyle of black-pigmented Corynebacterium aurimucosum ATCC 700975 (formerly C. nigricans CN-1) isolated from a vaginal swab of a woman with spontaneous abortion.</title>
        <authorList>
            <person name="Trost E."/>
            <person name="Gotker S."/>
            <person name="Schneider J."/>
            <person name="Schneiker-Bekel S."/>
            <person name="Szczepanowski R."/>
            <person name="Tilker A."/>
            <person name="Viehoever P."/>
            <person name="Arnold W."/>
            <person name="Bekel T."/>
            <person name="Blom J."/>
            <person name="Gartemann K.H."/>
            <person name="Linke B."/>
            <person name="Goesmann A."/>
            <person name="Puhler A."/>
            <person name="Shukla S.K."/>
            <person name="Tauch A."/>
        </authorList>
    </citation>
    <scope>NUCLEOTIDE SEQUENCE [LARGE SCALE GENOMIC DNA]</scope>
    <source>
        <strain>ATCC 700975 / DSM 44827 / CIP 107346 / CN-1</strain>
    </source>
</reference>
<dbReference type="EC" id="2.1.2.10" evidence="1"/>
<dbReference type="EMBL" id="CP001601">
    <property type="protein sequence ID" value="ACP33307.1"/>
    <property type="molecule type" value="Genomic_DNA"/>
</dbReference>
<dbReference type="RefSeq" id="WP_010190597.1">
    <property type="nucleotide sequence ID" value="NC_012590.1"/>
</dbReference>
<dbReference type="SMR" id="C3PHK3"/>
<dbReference type="STRING" id="548476.cauri_1714"/>
<dbReference type="GeneID" id="31924342"/>
<dbReference type="KEGG" id="car:cauri_1714"/>
<dbReference type="eggNOG" id="COG0404">
    <property type="taxonomic scope" value="Bacteria"/>
</dbReference>
<dbReference type="HOGENOM" id="CLU_007884_10_2_11"/>
<dbReference type="OrthoDB" id="9774591at2"/>
<dbReference type="Proteomes" id="UP000002077">
    <property type="component" value="Chromosome"/>
</dbReference>
<dbReference type="GO" id="GO:0005829">
    <property type="term" value="C:cytosol"/>
    <property type="evidence" value="ECO:0007669"/>
    <property type="project" value="TreeGrafter"/>
</dbReference>
<dbReference type="GO" id="GO:0005960">
    <property type="term" value="C:glycine cleavage complex"/>
    <property type="evidence" value="ECO:0007669"/>
    <property type="project" value="InterPro"/>
</dbReference>
<dbReference type="GO" id="GO:0004047">
    <property type="term" value="F:aminomethyltransferase activity"/>
    <property type="evidence" value="ECO:0007669"/>
    <property type="project" value="UniProtKB-UniRule"/>
</dbReference>
<dbReference type="GO" id="GO:0008483">
    <property type="term" value="F:transaminase activity"/>
    <property type="evidence" value="ECO:0007669"/>
    <property type="project" value="UniProtKB-KW"/>
</dbReference>
<dbReference type="GO" id="GO:0019464">
    <property type="term" value="P:glycine decarboxylation via glycine cleavage system"/>
    <property type="evidence" value="ECO:0007669"/>
    <property type="project" value="UniProtKB-UniRule"/>
</dbReference>
<dbReference type="FunFam" id="3.30.70.1400:FF:000001">
    <property type="entry name" value="Aminomethyltransferase"/>
    <property type="match status" value="1"/>
</dbReference>
<dbReference type="Gene3D" id="2.40.30.110">
    <property type="entry name" value="Aminomethyltransferase beta-barrel domains"/>
    <property type="match status" value="1"/>
</dbReference>
<dbReference type="Gene3D" id="3.30.70.1400">
    <property type="entry name" value="Aminomethyltransferase beta-barrel domains"/>
    <property type="match status" value="1"/>
</dbReference>
<dbReference type="Gene3D" id="4.10.1250.10">
    <property type="entry name" value="Aminomethyltransferase fragment"/>
    <property type="match status" value="1"/>
</dbReference>
<dbReference type="Gene3D" id="3.30.1360.120">
    <property type="entry name" value="Probable tRNA modification gtpase trme, domain 1"/>
    <property type="match status" value="1"/>
</dbReference>
<dbReference type="HAMAP" id="MF_00259">
    <property type="entry name" value="GcvT"/>
    <property type="match status" value="1"/>
</dbReference>
<dbReference type="InterPro" id="IPR006223">
    <property type="entry name" value="GCS_T"/>
</dbReference>
<dbReference type="InterPro" id="IPR022903">
    <property type="entry name" value="GCS_T_bac"/>
</dbReference>
<dbReference type="InterPro" id="IPR013977">
    <property type="entry name" value="GCST_C"/>
</dbReference>
<dbReference type="InterPro" id="IPR006222">
    <property type="entry name" value="GCV_T_N"/>
</dbReference>
<dbReference type="InterPro" id="IPR028896">
    <property type="entry name" value="GcvT/YgfZ/DmdA"/>
</dbReference>
<dbReference type="InterPro" id="IPR029043">
    <property type="entry name" value="GcvT/YgfZ_C"/>
</dbReference>
<dbReference type="InterPro" id="IPR027266">
    <property type="entry name" value="TrmE/GcvT_dom1"/>
</dbReference>
<dbReference type="NCBIfam" id="TIGR00528">
    <property type="entry name" value="gcvT"/>
    <property type="match status" value="1"/>
</dbReference>
<dbReference type="NCBIfam" id="NF001567">
    <property type="entry name" value="PRK00389.1"/>
    <property type="match status" value="1"/>
</dbReference>
<dbReference type="PANTHER" id="PTHR43757">
    <property type="entry name" value="AMINOMETHYLTRANSFERASE"/>
    <property type="match status" value="1"/>
</dbReference>
<dbReference type="PANTHER" id="PTHR43757:SF2">
    <property type="entry name" value="AMINOMETHYLTRANSFERASE, MITOCHONDRIAL"/>
    <property type="match status" value="1"/>
</dbReference>
<dbReference type="Pfam" id="PF01571">
    <property type="entry name" value="GCV_T"/>
    <property type="match status" value="1"/>
</dbReference>
<dbReference type="Pfam" id="PF08669">
    <property type="entry name" value="GCV_T_C"/>
    <property type="match status" value="1"/>
</dbReference>
<dbReference type="PIRSF" id="PIRSF006487">
    <property type="entry name" value="GcvT"/>
    <property type="match status" value="1"/>
</dbReference>
<dbReference type="SUPFAM" id="SSF101790">
    <property type="entry name" value="Aminomethyltransferase beta-barrel domain"/>
    <property type="match status" value="1"/>
</dbReference>
<dbReference type="SUPFAM" id="SSF103025">
    <property type="entry name" value="Folate-binding domain"/>
    <property type="match status" value="1"/>
</dbReference>
<accession>C3PHK3</accession>
<name>GCST_CORA7</name>
<protein>
    <recommendedName>
        <fullName evidence="1">Aminomethyltransferase</fullName>
        <ecNumber evidence="1">2.1.2.10</ecNumber>
    </recommendedName>
    <alternativeName>
        <fullName evidence="1">Glycine cleavage system T protein</fullName>
    </alternativeName>
</protein>
<feature type="chain" id="PRO_1000125634" description="Aminomethyltransferase">
    <location>
        <begin position="1"/>
        <end position="370"/>
    </location>
</feature>
<sequence>MTDYLHSPLHAEHEKLGATFTPFGPWEMPLKYDNELEEHRAVRNAAGLFDLSHMGEIWVNGPDAAEFLSYCFISNLTTLKEGKAKYSMICAEDGGIIDDLITYRLEETKFLVVPNAGNADTVWDALNERAEGFDVDLKNESRDVAMIAVQGPKALEILVPLVEDTKQQAVMDLPYYAAMTGKVARKYAFICRTGYTGEDGFELIVYNSDAPELWEELLKAGEEYGIKPCGLAARDSLRLEAGMPLYGNELTRDITPVEAGMSRAFAKKEQDFVGAEVLRQRAEEGPQAVITGLVSSQRRAARAGSEVYVGENKVGTVTSGQPSPTLGHPVALALIDTAAGLEPGAAVEVDIRGKRYPFEVSALPFYKRDK</sequence>
<comment type="function">
    <text evidence="1">The glycine cleavage system catalyzes the degradation of glycine.</text>
</comment>
<comment type="catalytic activity">
    <reaction evidence="1">
        <text>N(6)-[(R)-S(8)-aminomethyldihydrolipoyl]-L-lysyl-[protein] + (6S)-5,6,7,8-tetrahydrofolate = N(6)-[(R)-dihydrolipoyl]-L-lysyl-[protein] + (6R)-5,10-methylene-5,6,7,8-tetrahydrofolate + NH4(+)</text>
        <dbReference type="Rhea" id="RHEA:16945"/>
        <dbReference type="Rhea" id="RHEA-COMP:10475"/>
        <dbReference type="Rhea" id="RHEA-COMP:10492"/>
        <dbReference type="ChEBI" id="CHEBI:15636"/>
        <dbReference type="ChEBI" id="CHEBI:28938"/>
        <dbReference type="ChEBI" id="CHEBI:57453"/>
        <dbReference type="ChEBI" id="CHEBI:83100"/>
        <dbReference type="ChEBI" id="CHEBI:83143"/>
        <dbReference type="EC" id="2.1.2.10"/>
    </reaction>
</comment>
<comment type="subunit">
    <text evidence="1">The glycine cleavage system is composed of four proteins: P, T, L and H.</text>
</comment>
<comment type="similarity">
    <text evidence="1">Belongs to the GcvT family.</text>
</comment>
<evidence type="ECO:0000255" key="1">
    <source>
        <dbReference type="HAMAP-Rule" id="MF_00259"/>
    </source>
</evidence>
<organism>
    <name type="scientific">Corynebacterium aurimucosum (strain ATCC 700975 / DSM 44827 / CIP 107346 / CN-1)</name>
    <name type="common">Corynebacterium nigricans</name>
    <dbReference type="NCBI Taxonomy" id="548476"/>
    <lineage>
        <taxon>Bacteria</taxon>
        <taxon>Bacillati</taxon>
        <taxon>Actinomycetota</taxon>
        <taxon>Actinomycetes</taxon>
        <taxon>Mycobacteriales</taxon>
        <taxon>Corynebacteriaceae</taxon>
        <taxon>Corynebacterium</taxon>
    </lineage>
</organism>